<name>ARGB_BACHK</name>
<feature type="chain" id="PRO_0000112583" description="Acetylglutamate kinase">
    <location>
        <begin position="1"/>
        <end position="255"/>
    </location>
</feature>
<feature type="binding site" evidence="1">
    <location>
        <begin position="40"/>
        <end position="41"/>
    </location>
    <ligand>
        <name>substrate</name>
    </ligand>
</feature>
<feature type="binding site" evidence="1">
    <location>
        <position position="62"/>
    </location>
    <ligand>
        <name>substrate</name>
    </ligand>
</feature>
<feature type="binding site" evidence="1">
    <location>
        <position position="153"/>
    </location>
    <ligand>
        <name>substrate</name>
    </ligand>
</feature>
<feature type="site" description="Transition state stabilizer" evidence="1">
    <location>
        <position position="8"/>
    </location>
</feature>
<feature type="site" description="Transition state stabilizer" evidence="1">
    <location>
        <position position="212"/>
    </location>
</feature>
<keyword id="KW-0028">Amino-acid biosynthesis</keyword>
<keyword id="KW-0055">Arginine biosynthesis</keyword>
<keyword id="KW-0067">ATP-binding</keyword>
<keyword id="KW-0963">Cytoplasm</keyword>
<keyword id="KW-0418">Kinase</keyword>
<keyword id="KW-0547">Nucleotide-binding</keyword>
<keyword id="KW-0808">Transferase</keyword>
<accession>Q6HE30</accession>
<gene>
    <name evidence="1" type="primary">argB</name>
    <name type="ordered locus">BT9727_3877</name>
</gene>
<evidence type="ECO:0000255" key="1">
    <source>
        <dbReference type="HAMAP-Rule" id="MF_00082"/>
    </source>
</evidence>
<evidence type="ECO:0000305" key="2"/>
<organism>
    <name type="scientific">Bacillus thuringiensis subsp. konkukian (strain 97-27)</name>
    <dbReference type="NCBI Taxonomy" id="281309"/>
    <lineage>
        <taxon>Bacteria</taxon>
        <taxon>Bacillati</taxon>
        <taxon>Bacillota</taxon>
        <taxon>Bacilli</taxon>
        <taxon>Bacillales</taxon>
        <taxon>Bacillaceae</taxon>
        <taxon>Bacillus</taxon>
        <taxon>Bacillus cereus group</taxon>
    </lineage>
</organism>
<protein>
    <recommendedName>
        <fullName evidence="1">Acetylglutamate kinase</fullName>
        <ecNumber evidence="1">2.7.2.8</ecNumber>
    </recommendedName>
    <alternativeName>
        <fullName evidence="1">N-acetyl-L-glutamate 5-phosphotransferase</fullName>
    </alternativeName>
    <alternativeName>
        <fullName evidence="1">NAG kinase</fullName>
        <shortName evidence="1">NAGK</shortName>
    </alternativeName>
</protein>
<reference key="1">
    <citation type="journal article" date="2006" name="J. Bacteriol.">
        <title>Pathogenomic sequence analysis of Bacillus cereus and Bacillus thuringiensis isolates closely related to Bacillus anthracis.</title>
        <authorList>
            <person name="Han C.S."/>
            <person name="Xie G."/>
            <person name="Challacombe J.F."/>
            <person name="Altherr M.R."/>
            <person name="Bhotika S.S."/>
            <person name="Bruce D."/>
            <person name="Campbell C.S."/>
            <person name="Campbell M.L."/>
            <person name="Chen J."/>
            <person name="Chertkov O."/>
            <person name="Cleland C."/>
            <person name="Dimitrijevic M."/>
            <person name="Doggett N.A."/>
            <person name="Fawcett J.J."/>
            <person name="Glavina T."/>
            <person name="Goodwin L.A."/>
            <person name="Hill K.K."/>
            <person name="Hitchcock P."/>
            <person name="Jackson P.J."/>
            <person name="Keim P."/>
            <person name="Kewalramani A.R."/>
            <person name="Longmire J."/>
            <person name="Lucas S."/>
            <person name="Malfatti S."/>
            <person name="McMurry K."/>
            <person name="Meincke L.J."/>
            <person name="Misra M."/>
            <person name="Moseman B.L."/>
            <person name="Mundt M."/>
            <person name="Munk A.C."/>
            <person name="Okinaka R.T."/>
            <person name="Parson-Quintana B."/>
            <person name="Reilly L.P."/>
            <person name="Richardson P."/>
            <person name="Robinson D.L."/>
            <person name="Rubin E."/>
            <person name="Saunders E."/>
            <person name="Tapia R."/>
            <person name="Tesmer J.G."/>
            <person name="Thayer N."/>
            <person name="Thompson L.S."/>
            <person name="Tice H."/>
            <person name="Ticknor L.O."/>
            <person name="Wills P.L."/>
            <person name="Brettin T.S."/>
            <person name="Gilna P."/>
        </authorList>
    </citation>
    <scope>NUCLEOTIDE SEQUENCE [LARGE SCALE GENOMIC DNA]</scope>
    <source>
        <strain>97-27</strain>
    </source>
</reference>
<proteinExistence type="inferred from homology"/>
<dbReference type="EC" id="2.7.2.8" evidence="1"/>
<dbReference type="EMBL" id="AE017355">
    <property type="protein sequence ID" value="AAT60753.1"/>
    <property type="status" value="ALT_SEQ"/>
    <property type="molecule type" value="Genomic_DNA"/>
</dbReference>
<dbReference type="RefSeq" id="WP_011181845.1">
    <property type="nucleotide sequence ID" value="NC_005957.1"/>
</dbReference>
<dbReference type="RefSeq" id="YP_038196.1">
    <property type="nucleotide sequence ID" value="NC_005957.1"/>
</dbReference>
<dbReference type="SMR" id="Q6HE30"/>
<dbReference type="KEGG" id="btk:BT9727_3877"/>
<dbReference type="PATRIC" id="fig|281309.8.peg.4135"/>
<dbReference type="HOGENOM" id="CLU_053680_1_0_9"/>
<dbReference type="UniPathway" id="UPA00068">
    <property type="reaction ID" value="UER00107"/>
</dbReference>
<dbReference type="Proteomes" id="UP000001301">
    <property type="component" value="Chromosome"/>
</dbReference>
<dbReference type="GO" id="GO:0005737">
    <property type="term" value="C:cytoplasm"/>
    <property type="evidence" value="ECO:0007669"/>
    <property type="project" value="UniProtKB-SubCell"/>
</dbReference>
<dbReference type="GO" id="GO:0003991">
    <property type="term" value="F:acetylglutamate kinase activity"/>
    <property type="evidence" value="ECO:0007669"/>
    <property type="project" value="UniProtKB-UniRule"/>
</dbReference>
<dbReference type="GO" id="GO:0005524">
    <property type="term" value="F:ATP binding"/>
    <property type="evidence" value="ECO:0007669"/>
    <property type="project" value="UniProtKB-UniRule"/>
</dbReference>
<dbReference type="GO" id="GO:0042450">
    <property type="term" value="P:arginine biosynthetic process via ornithine"/>
    <property type="evidence" value="ECO:0007669"/>
    <property type="project" value="UniProtKB-UniRule"/>
</dbReference>
<dbReference type="GO" id="GO:0006526">
    <property type="term" value="P:L-arginine biosynthetic process"/>
    <property type="evidence" value="ECO:0007669"/>
    <property type="project" value="UniProtKB-UniPathway"/>
</dbReference>
<dbReference type="CDD" id="cd04238">
    <property type="entry name" value="AAK_NAGK-like"/>
    <property type="match status" value="1"/>
</dbReference>
<dbReference type="Gene3D" id="3.40.1160.10">
    <property type="entry name" value="Acetylglutamate kinase-like"/>
    <property type="match status" value="1"/>
</dbReference>
<dbReference type="HAMAP" id="MF_00082">
    <property type="entry name" value="ArgB"/>
    <property type="match status" value="1"/>
</dbReference>
<dbReference type="InterPro" id="IPR036393">
    <property type="entry name" value="AceGlu_kinase-like_sf"/>
</dbReference>
<dbReference type="InterPro" id="IPR004662">
    <property type="entry name" value="AcgluKinase_fam"/>
</dbReference>
<dbReference type="InterPro" id="IPR037528">
    <property type="entry name" value="ArgB"/>
</dbReference>
<dbReference type="InterPro" id="IPR001048">
    <property type="entry name" value="Asp/Glu/Uridylate_kinase"/>
</dbReference>
<dbReference type="NCBIfam" id="TIGR00761">
    <property type="entry name" value="argB"/>
    <property type="match status" value="1"/>
</dbReference>
<dbReference type="PANTHER" id="PTHR23342">
    <property type="entry name" value="N-ACETYLGLUTAMATE SYNTHASE"/>
    <property type="match status" value="1"/>
</dbReference>
<dbReference type="PANTHER" id="PTHR23342:SF0">
    <property type="entry name" value="N-ACETYLGLUTAMATE SYNTHASE, MITOCHONDRIAL"/>
    <property type="match status" value="1"/>
</dbReference>
<dbReference type="Pfam" id="PF00696">
    <property type="entry name" value="AA_kinase"/>
    <property type="match status" value="1"/>
</dbReference>
<dbReference type="PIRSF" id="PIRSF000728">
    <property type="entry name" value="NAGK"/>
    <property type="match status" value="1"/>
</dbReference>
<dbReference type="SUPFAM" id="SSF53633">
    <property type="entry name" value="Carbamate kinase-like"/>
    <property type="match status" value="1"/>
</dbReference>
<sequence>MNDYIVVKCGGSMLDQLNDVFFDCIKKLQQQYKVVIVHGGGPEIDAKLKDCNINVEKRDGLRVTPKEVMDVVQMVLCGSTNKKFVMNLQKHNLLAVGCSGCDGKLLQVQPVSEEIGYVGEVSYVETALLKGLINMNYIPVIAPIGIHDNEIYNINADTAAAGIAAALSAKELILITDVDGILHEGKLVKKTDESEIATFIEKGVITGGMIPKVQAALASLKMGVQKISIVNGTKDFTEDTGECIGTTVTRGVSIV</sequence>
<comment type="function">
    <text evidence="1">Catalyzes the ATP-dependent phosphorylation of N-acetyl-L-glutamate.</text>
</comment>
<comment type="catalytic activity">
    <reaction evidence="1">
        <text>N-acetyl-L-glutamate + ATP = N-acetyl-L-glutamyl 5-phosphate + ADP</text>
        <dbReference type="Rhea" id="RHEA:14629"/>
        <dbReference type="ChEBI" id="CHEBI:30616"/>
        <dbReference type="ChEBI" id="CHEBI:44337"/>
        <dbReference type="ChEBI" id="CHEBI:57936"/>
        <dbReference type="ChEBI" id="CHEBI:456216"/>
        <dbReference type="EC" id="2.7.2.8"/>
    </reaction>
</comment>
<comment type="pathway">
    <text evidence="1">Amino-acid biosynthesis; L-arginine biosynthesis; N(2)-acetyl-L-ornithine from L-glutamate: step 2/4.</text>
</comment>
<comment type="subcellular location">
    <subcellularLocation>
        <location evidence="1">Cytoplasm</location>
    </subcellularLocation>
</comment>
<comment type="similarity">
    <text evidence="1">Belongs to the acetylglutamate kinase family. ArgB subfamily.</text>
</comment>
<comment type="sequence caution" evidence="2">
    <conflict type="erroneous termination">
        <sequence resource="EMBL-CDS" id="AAT60753"/>
    </conflict>
    <text>Truncated C-terminus.</text>
</comment>